<feature type="transit peptide" description="Mitochondrion" evidence="1">
    <location>
        <begin position="1"/>
        <end position="30"/>
    </location>
</feature>
<feature type="chain" id="PRO_0000253903" description="Citrate synthase, mitochondrial">
    <location>
        <begin position="31"/>
        <end position="469"/>
    </location>
</feature>
<feature type="active site" evidence="4">
    <location>
        <position position="304"/>
    </location>
</feature>
<feature type="active site" evidence="4">
    <location>
        <position position="350"/>
    </location>
</feature>
<feature type="active site" evidence="4">
    <location>
        <position position="405"/>
    </location>
</feature>
<feature type="binding site" description="in chain A" evidence="2">
    <location>
        <position position="359"/>
    </location>
    <ligand>
        <name>oxaloacetate</name>
        <dbReference type="ChEBI" id="CHEBI:16452"/>
        <note>ligand shared between homodimeric partners</note>
    </ligand>
</feature>
<feature type="binding site" description="in chain A" evidence="2">
    <location>
        <position position="431"/>
    </location>
    <ligand>
        <name>oxaloacetate</name>
        <dbReference type="ChEBI" id="CHEBI:16452"/>
        <note>ligand shared between homodimeric partners</note>
    </ligand>
</feature>
<feature type="binding site" description="in chain B" evidence="2">
    <location>
        <position position="451"/>
    </location>
    <ligand>
        <name>oxaloacetate</name>
        <dbReference type="ChEBI" id="CHEBI:16452"/>
        <note>ligand shared between homodimeric partners</note>
    </ligand>
</feature>
<reference key="1">
    <citation type="journal article" date="2005" name="Am. J. Physiol.">
        <title>Mitochondrial enzyme content in the muscles of high-performance fish: evolution and variation among fiber types.</title>
        <authorList>
            <person name="Dalziel A.C."/>
            <person name="Moore S.E."/>
            <person name="Moyes C.D."/>
        </authorList>
    </citation>
    <scope>NUCLEOTIDE SEQUENCE [MRNA]</scope>
    <source>
        <tissue>Red muscle</tissue>
    </source>
</reference>
<protein>
    <recommendedName>
        <fullName>Citrate synthase, mitochondrial</fullName>
        <ecNumber>2.3.3.1</ecNumber>
    </recommendedName>
    <alternativeName>
        <fullName>Citrate (Si)-synthase</fullName>
    </alternativeName>
</protein>
<accession>Q6S9V7</accession>
<proteinExistence type="evidence at transcript level"/>
<dbReference type="EC" id="2.3.3.1"/>
<dbReference type="EMBL" id="AY461850">
    <property type="protein sequence ID" value="AAR98860.1"/>
    <property type="molecule type" value="mRNA"/>
</dbReference>
<dbReference type="SMR" id="Q6S9V7"/>
<dbReference type="UniPathway" id="UPA00223">
    <property type="reaction ID" value="UER00717"/>
</dbReference>
<dbReference type="GO" id="GO:0005759">
    <property type="term" value="C:mitochondrial matrix"/>
    <property type="evidence" value="ECO:0000250"/>
    <property type="project" value="UniProtKB"/>
</dbReference>
<dbReference type="GO" id="GO:0004108">
    <property type="term" value="F:citrate (Si)-synthase activity"/>
    <property type="evidence" value="ECO:0000250"/>
    <property type="project" value="UniProtKB"/>
</dbReference>
<dbReference type="GO" id="GO:0042802">
    <property type="term" value="F:identical protein binding"/>
    <property type="evidence" value="ECO:0000250"/>
    <property type="project" value="UniProtKB"/>
</dbReference>
<dbReference type="GO" id="GO:0005975">
    <property type="term" value="P:carbohydrate metabolic process"/>
    <property type="evidence" value="ECO:0000250"/>
    <property type="project" value="UniProtKB"/>
</dbReference>
<dbReference type="GO" id="GO:0006101">
    <property type="term" value="P:citrate metabolic process"/>
    <property type="evidence" value="ECO:0007669"/>
    <property type="project" value="InterPro"/>
</dbReference>
<dbReference type="GO" id="GO:0006099">
    <property type="term" value="P:tricarboxylic acid cycle"/>
    <property type="evidence" value="ECO:0007669"/>
    <property type="project" value="UniProtKB-UniPathway"/>
</dbReference>
<dbReference type="CDD" id="cd06105">
    <property type="entry name" value="ScCit1-2_like"/>
    <property type="match status" value="1"/>
</dbReference>
<dbReference type="FunFam" id="1.10.230.10:FF:000001">
    <property type="entry name" value="Citrate synthase"/>
    <property type="match status" value="1"/>
</dbReference>
<dbReference type="FunFam" id="1.10.580.10:FF:000001">
    <property type="entry name" value="Citrate synthase"/>
    <property type="match status" value="1"/>
</dbReference>
<dbReference type="Gene3D" id="1.10.580.10">
    <property type="entry name" value="Citrate Synthase, domain 1"/>
    <property type="match status" value="1"/>
</dbReference>
<dbReference type="Gene3D" id="1.10.230.10">
    <property type="entry name" value="Cytochrome P450-Terp, domain 2"/>
    <property type="match status" value="1"/>
</dbReference>
<dbReference type="InterPro" id="IPR016142">
    <property type="entry name" value="Citrate_synth-like_lrg_a-sub"/>
</dbReference>
<dbReference type="InterPro" id="IPR016143">
    <property type="entry name" value="Citrate_synth-like_sm_a-sub"/>
</dbReference>
<dbReference type="InterPro" id="IPR002020">
    <property type="entry name" value="Citrate_synthase"/>
</dbReference>
<dbReference type="InterPro" id="IPR019810">
    <property type="entry name" value="Citrate_synthase_AS"/>
</dbReference>
<dbReference type="InterPro" id="IPR010109">
    <property type="entry name" value="Citrate_synthase_euk"/>
</dbReference>
<dbReference type="InterPro" id="IPR036969">
    <property type="entry name" value="Citrate_synthase_sf"/>
</dbReference>
<dbReference type="NCBIfam" id="TIGR01793">
    <property type="entry name" value="cit_synth_euk"/>
    <property type="match status" value="1"/>
</dbReference>
<dbReference type="NCBIfam" id="NF007128">
    <property type="entry name" value="PRK09569.1"/>
    <property type="match status" value="1"/>
</dbReference>
<dbReference type="PANTHER" id="PTHR11739">
    <property type="entry name" value="CITRATE SYNTHASE"/>
    <property type="match status" value="1"/>
</dbReference>
<dbReference type="PANTHER" id="PTHR11739:SF8">
    <property type="entry name" value="CITRATE SYNTHASE, MITOCHONDRIAL"/>
    <property type="match status" value="1"/>
</dbReference>
<dbReference type="Pfam" id="PF00285">
    <property type="entry name" value="Citrate_synt"/>
    <property type="match status" value="1"/>
</dbReference>
<dbReference type="PRINTS" id="PR00143">
    <property type="entry name" value="CITRTSNTHASE"/>
</dbReference>
<dbReference type="SUPFAM" id="SSF48256">
    <property type="entry name" value="Citrate synthase"/>
    <property type="match status" value="1"/>
</dbReference>
<dbReference type="PROSITE" id="PS00480">
    <property type="entry name" value="CITRATE_SYNTHASE"/>
    <property type="match status" value="1"/>
</dbReference>
<organism>
    <name type="scientific">Katsuwonus pelamis</name>
    <name type="common">Skipjack tuna</name>
    <name type="synonym">Scomber pelamis</name>
    <dbReference type="NCBI Taxonomy" id="8226"/>
    <lineage>
        <taxon>Eukaryota</taxon>
        <taxon>Metazoa</taxon>
        <taxon>Chordata</taxon>
        <taxon>Craniata</taxon>
        <taxon>Vertebrata</taxon>
        <taxon>Euteleostomi</taxon>
        <taxon>Actinopterygii</taxon>
        <taxon>Neopterygii</taxon>
        <taxon>Teleostei</taxon>
        <taxon>Neoteleostei</taxon>
        <taxon>Acanthomorphata</taxon>
        <taxon>Pelagiaria</taxon>
        <taxon>Scombriformes</taxon>
        <taxon>Scombridae</taxon>
        <taxon>Katsuwonus</taxon>
    </lineage>
</organism>
<evidence type="ECO:0000250" key="1"/>
<evidence type="ECO:0000250" key="2">
    <source>
        <dbReference type="UniProtKB" id="O75390"/>
    </source>
</evidence>
<evidence type="ECO:0000250" key="3">
    <source>
        <dbReference type="UniProtKB" id="P00889"/>
    </source>
</evidence>
<evidence type="ECO:0000255" key="4">
    <source>
        <dbReference type="PROSITE-ProRule" id="PRU10117"/>
    </source>
</evidence>
<evidence type="ECO:0000305" key="5"/>
<gene>
    <name type="primary">cs</name>
</gene>
<keyword id="KW-0496">Mitochondrion</keyword>
<keyword id="KW-0808">Transferase</keyword>
<keyword id="KW-0809">Transit peptide</keyword>
<keyword id="KW-0816">Tricarboxylic acid cycle</keyword>
<name>CISY_KATPE</name>
<sequence length="469" mass="52207">MSFLSVSRLAPKLLNSKNATYFLVAARNASASTTNLKDVLSDLIPKEQSRIKNFKQQYGKTNIGQITVDMVYGGMRGMKGLVYETSVLDPEEGIRFRGYSIPECQKLLPKAPGGEEPLPEGLFWLLVTGQVPTEEQVKWVSKEWAKRAALPSHVVTMLDNFPTNLHPMSQFSAAITALNSESSFARAYSEGVHKTKYWEFVYEDSMDLIAKLPCIAAKIYRNLYREGSSIGAIDSNLDWSHNFTNMLGYSEAQFTELMRLYLTIHSDHEGGNVSAHTSHLVGSALSDPYLSFSAAMNGLAGPLHGLANQEVLVWLTALQKEMGGEVSDERMRDYIWNTLKSGRVVPGYGHAVLRKTDPRYTCQREFALKHLPNDPMFKLVAQLYKIVPNVLLEQGKAKNPWPNVDAHSGVLLQYYGMTEMNYYTVLFGVSRALGVLAQLVWSRALGFPLERPKSMSTDGLMTLVGAKSG</sequence>
<comment type="function">
    <text evidence="5">Key enzyme of the Krebs tricarboxylic acid cycle which catalyzes the synthesis of citrate from acetyl coenzyme A and oxaloacetate.</text>
</comment>
<comment type="catalytic activity">
    <reaction evidence="4">
        <text>oxaloacetate + acetyl-CoA + H2O = citrate + CoA + H(+)</text>
        <dbReference type="Rhea" id="RHEA:16845"/>
        <dbReference type="ChEBI" id="CHEBI:15377"/>
        <dbReference type="ChEBI" id="CHEBI:15378"/>
        <dbReference type="ChEBI" id="CHEBI:16452"/>
        <dbReference type="ChEBI" id="CHEBI:16947"/>
        <dbReference type="ChEBI" id="CHEBI:57287"/>
        <dbReference type="ChEBI" id="CHEBI:57288"/>
        <dbReference type="EC" id="2.3.3.1"/>
    </reaction>
</comment>
<comment type="pathway">
    <text>Carbohydrate metabolism; tricarboxylic acid cycle; isocitrate from oxaloacetate: step 1/2.</text>
</comment>
<comment type="subunit">
    <text evidence="2">Homodimer.</text>
</comment>
<comment type="subcellular location">
    <subcellularLocation>
        <location evidence="3">Mitochondrion matrix</location>
    </subcellularLocation>
</comment>
<comment type="miscellaneous">
    <text>Citrate synthase is found in nearly all cells capable of oxidative metabolism.</text>
</comment>
<comment type="similarity">
    <text evidence="5">Belongs to the citrate synthase family.</text>
</comment>